<dbReference type="EMBL" id="X52389">
    <property type="protein sequence ID" value="CAA36618.1"/>
    <property type="molecule type" value="Genomic_DNA"/>
</dbReference>
<dbReference type="EMBL" id="M20369">
    <property type="protein sequence ID" value="AAA23347.1"/>
    <property type="molecule type" value="Genomic_DNA"/>
</dbReference>
<dbReference type="PIR" id="S15266">
    <property type="entry name" value="S15266"/>
</dbReference>
<dbReference type="SMR" id="P13253"/>
<dbReference type="GO" id="GO:0016020">
    <property type="term" value="C:membrane"/>
    <property type="evidence" value="ECO:0007669"/>
    <property type="project" value="UniProtKB-SubCell"/>
</dbReference>
<dbReference type="GO" id="GO:0009289">
    <property type="term" value="C:pilus"/>
    <property type="evidence" value="ECO:0007669"/>
    <property type="project" value="UniProtKB-SubCell"/>
</dbReference>
<dbReference type="GO" id="GO:0015627">
    <property type="term" value="C:type II protein secretion system complex"/>
    <property type="evidence" value="ECO:0007669"/>
    <property type="project" value="InterPro"/>
</dbReference>
<dbReference type="GO" id="GO:0007155">
    <property type="term" value="P:cell adhesion"/>
    <property type="evidence" value="ECO:0007669"/>
    <property type="project" value="InterPro"/>
</dbReference>
<dbReference type="GO" id="GO:0015628">
    <property type="term" value="P:protein secretion by the type II secretion system"/>
    <property type="evidence" value="ECO:0007669"/>
    <property type="project" value="InterPro"/>
</dbReference>
<dbReference type="Gene3D" id="3.30.700.10">
    <property type="entry name" value="Glycoprotein, Type 4 Pilin"/>
    <property type="match status" value="1"/>
</dbReference>
<dbReference type="InterPro" id="IPR000983">
    <property type="entry name" value="Bac_GSPG_pilin"/>
</dbReference>
<dbReference type="InterPro" id="IPR012902">
    <property type="entry name" value="N_methyl_site"/>
</dbReference>
<dbReference type="InterPro" id="IPR001082">
    <property type="entry name" value="Pilin"/>
</dbReference>
<dbReference type="InterPro" id="IPR045584">
    <property type="entry name" value="Pilin-like"/>
</dbReference>
<dbReference type="InterPro" id="IPR050470">
    <property type="entry name" value="T4P/T2SS_Core"/>
</dbReference>
<dbReference type="NCBIfam" id="TIGR02532">
    <property type="entry name" value="IV_pilin_GFxxxE"/>
    <property type="match status" value="1"/>
</dbReference>
<dbReference type="PANTHER" id="PTHR30093">
    <property type="entry name" value="GENERAL SECRETION PATHWAY PROTEIN G"/>
    <property type="match status" value="1"/>
</dbReference>
<dbReference type="PANTHER" id="PTHR30093:SF34">
    <property type="entry name" value="PREPILIN PEPTIDASE-DEPENDENT PROTEIN D"/>
    <property type="match status" value="1"/>
</dbReference>
<dbReference type="Pfam" id="PF07963">
    <property type="entry name" value="N_methyl"/>
    <property type="match status" value="1"/>
</dbReference>
<dbReference type="Pfam" id="PF00114">
    <property type="entry name" value="Pilin"/>
    <property type="match status" value="1"/>
</dbReference>
<dbReference type="PRINTS" id="PR00813">
    <property type="entry name" value="BCTERIALGSPG"/>
</dbReference>
<dbReference type="SUPFAM" id="SSF54523">
    <property type="entry name" value="Pili subunits"/>
    <property type="match status" value="1"/>
</dbReference>
<dbReference type="PROSITE" id="PS00409">
    <property type="entry name" value="PROKAR_NTER_METHYL"/>
    <property type="match status" value="1"/>
</dbReference>
<feature type="propeptide" id="PRO_0000024127" description="Leader sequence" evidence="4">
    <location>
        <begin position="1"/>
        <end position="7"/>
    </location>
</feature>
<feature type="chain" id="PRO_0000024128" description="Type IV major fimbrial protein FimA">
    <location>
        <begin position="8"/>
        <end position="156"/>
    </location>
</feature>
<feature type="transmembrane region" description="Helical" evidence="3">
    <location>
        <begin position="8"/>
        <end position="28"/>
    </location>
</feature>
<feature type="modified residue" description="N-methylphenylalanine" evidence="4">
    <location>
        <position position="8"/>
    </location>
</feature>
<feature type="disulfide bond" evidence="1">
    <location>
        <begin position="57"/>
        <end position="67"/>
    </location>
</feature>
<feature type="disulfide bond" evidence="1">
    <location>
        <begin position="140"/>
        <end position="153"/>
    </location>
</feature>
<feature type="sequence variant" description="In strain: Serogroup D isolate 340.">
    <original>GE</original>
    <variation>DK</variation>
    <location>
        <begin position="65"/>
        <end position="66"/>
    </location>
</feature>
<feature type="sequence variant" description="In strain: Serogroup D isolate 340.">
    <original>D</original>
    <variation>E</variation>
    <location>
        <position position="80"/>
    </location>
</feature>
<feature type="sequence variant" description="In strain: Serogroup D isolate 340.">
    <original>A</original>
    <variation>T</variation>
    <location>
        <position position="95"/>
    </location>
</feature>
<evidence type="ECO:0000250" key="1"/>
<evidence type="ECO:0000250" key="2">
    <source>
        <dbReference type="UniProtKB" id="A5EWR9"/>
    </source>
</evidence>
<evidence type="ECO:0000255" key="3"/>
<evidence type="ECO:0000255" key="4">
    <source>
        <dbReference type="PROSITE-ProRule" id="PRU01070"/>
    </source>
</evidence>
<evidence type="ECO:0000305" key="5"/>
<organism>
    <name type="scientific">Dichelobacter nodosus</name>
    <name type="common">Bacteroides nodosus</name>
    <dbReference type="NCBI Taxonomy" id="870"/>
    <lineage>
        <taxon>Bacteria</taxon>
        <taxon>Pseudomonadati</taxon>
        <taxon>Pseudomonadota</taxon>
        <taxon>Gammaproteobacteria</taxon>
        <taxon>Cardiobacteriales</taxon>
        <taxon>Cardiobacteriaceae</taxon>
        <taxon>Dichelobacter</taxon>
    </lineage>
</organism>
<accession>P13253</accession>
<keyword id="KW-1015">Disulfide bond</keyword>
<keyword id="KW-0281">Fimbrium</keyword>
<keyword id="KW-0472">Membrane</keyword>
<keyword id="KW-0488">Methylation</keyword>
<keyword id="KW-0812">Transmembrane</keyword>
<keyword id="KW-1133">Transmembrane helix</keyword>
<gene>
    <name type="primary">fimA</name>
</gene>
<proteinExistence type="inferred from homology"/>
<name>FMAD_DICNO</name>
<comment type="function">
    <text evidence="2">Major component of the type IV fimbriae that plays an essential role in twitching motility, natural transformation, and protease secretion.</text>
</comment>
<comment type="subunit">
    <text>The pili are polar flexible filaments of about 5.4 nanometers diameter and 2.5 micrometers average length; they consist of only a single polypeptide chain arranged in a helical configuration of five subunits per turn in the assembled pilus.</text>
</comment>
<comment type="subcellular location">
    <subcellularLocation>
        <location evidence="2">Fimbrium</location>
    </subcellularLocation>
    <subcellularLocation>
        <location evidence="3">Membrane</location>
        <topology evidence="3">Single-pass membrane protein</topology>
    </subcellularLocation>
</comment>
<comment type="miscellaneous">
    <text>The sequence shown is that of isolate 340.</text>
</comment>
<comment type="similarity">
    <text evidence="5">Belongs to the N-Me-Phe pilin family.</text>
</comment>
<sequence>MKSLQKGFTLIELMIVVAIIGILAAIAIPQYQNYIARSQVSRVMSETGQMRTAIETCVLDGKEAGECFIGWTGSNLLDGDFTAGTESTAAATGQAGITIKYPVAADDEGNIVATFGRNAAAAIKPQTLTWSRSKEGTWTCATTVEAKFQPTGCKDK</sequence>
<reference key="1">
    <citation type="journal article" date="1991" name="Mol. Microbiol.">
        <title>Gene sequences and comparison of the fimbrial subunits representative of Bacteroides nodosus serotypes A to I: class I and class II strains.</title>
        <authorList>
            <person name="Mattick J.S."/>
            <person name="Anderson B.J."/>
            <person name="Cox P.T."/>
            <person name="Dalrymple B.P."/>
            <person name="Bills M.M."/>
            <person name="Hobbs M."/>
            <person name="Egerton J.R."/>
        </authorList>
    </citation>
    <scope>NUCLEOTIDE SEQUENCE [GENOMIC DNA]</scope>
    <source>
        <strain>Serogroup D isolate VCS1172</strain>
    </source>
</reference>
<reference key="2">
    <citation type="journal article" date="1988" name="J. Gen. Microbiol.">
        <title>Nucleotide sequence of the pilin gene of Bacteroides nodosus 340 (serogroup D) and implications for the relatedness of serogroups.</title>
        <authorList>
            <person name="Finney K.G."/>
            <person name="Elleman T.C."/>
            <person name="Stewart D.J."/>
        </authorList>
    </citation>
    <scope>NUCLEOTIDE SEQUENCE [GENOMIC DNA]</scope>
    <source>
        <strain>Serogroup D isolate 340</strain>
    </source>
</reference>
<protein>
    <recommendedName>
        <fullName>Type IV major fimbrial protein FimA</fullName>
    </recommendedName>
    <alternativeName>
        <fullName>340 antigen</fullName>
    </alternativeName>
    <alternativeName>
        <fullName>Pilin</fullName>
    </alternativeName>
    <alternativeName>
        <fullName>Serogroup D</fullName>
    </alternativeName>
</protein>